<organism>
    <name type="scientific">Mus musculus</name>
    <name type="common">Mouse</name>
    <dbReference type="NCBI Taxonomy" id="10090"/>
    <lineage>
        <taxon>Eukaryota</taxon>
        <taxon>Metazoa</taxon>
        <taxon>Chordata</taxon>
        <taxon>Craniata</taxon>
        <taxon>Vertebrata</taxon>
        <taxon>Euteleostomi</taxon>
        <taxon>Mammalia</taxon>
        <taxon>Eutheria</taxon>
        <taxon>Euarchontoglires</taxon>
        <taxon>Glires</taxon>
        <taxon>Rodentia</taxon>
        <taxon>Myomorpha</taxon>
        <taxon>Muroidea</taxon>
        <taxon>Muridae</taxon>
        <taxon>Murinae</taxon>
        <taxon>Mus</taxon>
        <taxon>Mus</taxon>
    </lineage>
</organism>
<reference key="1">
    <citation type="journal article" date="1996" name="J. Cell Sci.">
        <title>Molecular characterisation of ninein, a new coiled-coil protein of the centrosome.</title>
        <authorList>
            <person name="Bouckson-Castaing V."/>
            <person name="Moudjou M."/>
            <person name="Ferguson D.J.P."/>
            <person name="Mucklow S."/>
            <person name="Belkaid Y."/>
            <person name="Milon G."/>
            <person name="Crocker P.R."/>
        </authorList>
    </citation>
    <scope>NUCLEOTIDE SEQUENCE [MRNA] (ISOFORM 2)</scope>
    <scope>SUBCELLULAR LOCATION</scope>
    <scope>TISSUE SPECIFICITY</scope>
    <scope>DEVELOPMENTAL STAGE</scope>
    <source>
        <strain>C57BL/6J</strain>
        <tissue>Neonatal macrophage</tissue>
    </source>
</reference>
<reference key="2">
    <citation type="journal article" date="2005" name="J. Cell Sci.">
        <title>Microtubule nucleation and anchoring at the centrosome are independent processes linked by ninein function.</title>
        <authorList>
            <person name="Delgehyr N."/>
            <person name="Sillibourne J."/>
            <person name="Bornens M."/>
        </authorList>
    </citation>
    <scope>NUCLEOTIDE SEQUENCE [MRNA] (ISOFORM 1)</scope>
    <scope>INTERACTION WITH TUBGCP3 AND GAMMA TUBULIN</scope>
    <scope>SUBCELLULAR LOCATION</scope>
    <scope>DOMAIN</scope>
    <source>
        <strain evidence="13">C57BL/6J</strain>
    </source>
</reference>
<reference key="3">
    <citation type="journal article" date="2003" name="DNA Res.">
        <title>Prediction of the coding sequences of mouse homologues of KIAA gene: III. The complete nucleotide sequences of 500 mouse KIAA-homologous cDNAs identified by screening of terminal sequences of cDNA clones randomly sampled from size-fractionated libraries.</title>
        <authorList>
            <person name="Okazaki N."/>
            <person name="Kikuno R."/>
            <person name="Ohara R."/>
            <person name="Inamoto S."/>
            <person name="Koseki H."/>
            <person name="Hiraoka S."/>
            <person name="Saga Y."/>
            <person name="Nagase T."/>
            <person name="Ohara O."/>
            <person name="Koga H."/>
        </authorList>
    </citation>
    <scope>NUCLEOTIDE SEQUENCE [LARGE SCALE MRNA] (ISOFORM 3)</scope>
    <source>
        <tissue>Embryonic tail</tissue>
    </source>
</reference>
<reference key="4">
    <citation type="journal article" date="2009" name="PLoS Biol.">
        <title>Lineage-specific biology revealed by a finished genome assembly of the mouse.</title>
        <authorList>
            <person name="Church D.M."/>
            <person name="Goodstadt L."/>
            <person name="Hillier L.W."/>
            <person name="Zody M.C."/>
            <person name="Goldstein S."/>
            <person name="She X."/>
            <person name="Bult C.J."/>
            <person name="Agarwala R."/>
            <person name="Cherry J.L."/>
            <person name="DiCuccio M."/>
            <person name="Hlavina W."/>
            <person name="Kapustin Y."/>
            <person name="Meric P."/>
            <person name="Maglott D."/>
            <person name="Birtle Z."/>
            <person name="Marques A.C."/>
            <person name="Graves T."/>
            <person name="Zhou S."/>
            <person name="Teague B."/>
            <person name="Potamousis K."/>
            <person name="Churas C."/>
            <person name="Place M."/>
            <person name="Herschleb J."/>
            <person name="Runnheim R."/>
            <person name="Forrest D."/>
            <person name="Amos-Landgraf J."/>
            <person name="Schwartz D.C."/>
            <person name="Cheng Z."/>
            <person name="Lindblad-Toh K."/>
            <person name="Eichler E.E."/>
            <person name="Ponting C.P."/>
        </authorList>
    </citation>
    <scope>NUCLEOTIDE SEQUENCE [LARGE SCALE GENOMIC DNA]</scope>
    <source>
        <strain>C57BL/6J</strain>
    </source>
</reference>
<reference key="5">
    <citation type="journal article" date="2004" name="Genome Res.">
        <title>The status, quality, and expansion of the NIH full-length cDNA project: the Mammalian Gene Collection (MGC).</title>
        <authorList>
            <consortium name="The MGC Project Team"/>
        </authorList>
    </citation>
    <scope>NUCLEOTIDE SEQUENCE [LARGE SCALE MRNA] (ISOFORM 3)</scope>
    <source>
        <tissue evidence="12">Brain</tissue>
    </source>
</reference>
<reference key="6">
    <citation type="journal article" date="2000" name="J. Cell Sci.">
        <title>Microtubule minus-end anchorage at centrosomal and non-centrosomal sites: the role of ninein.</title>
        <authorList>
            <person name="Mogensen M.M."/>
            <person name="Malik A."/>
            <person name="Piel M."/>
            <person name="Bouckson-Castaing V."/>
            <person name="Bornens M."/>
        </authorList>
    </citation>
    <scope>FUNCTION</scope>
</reference>
<reference key="7">
    <citation type="journal article" date="2010" name="Cell">
        <title>A tissue-specific atlas of mouse protein phosphorylation and expression.</title>
        <authorList>
            <person name="Huttlin E.L."/>
            <person name="Jedrychowski M.P."/>
            <person name="Elias J.E."/>
            <person name="Goswami T."/>
            <person name="Rad R."/>
            <person name="Beausoleil S.A."/>
            <person name="Villen J."/>
            <person name="Haas W."/>
            <person name="Sowa M.E."/>
            <person name="Gygi S.P."/>
        </authorList>
    </citation>
    <scope>PHOSPHORYLATION [LARGE SCALE ANALYSIS] AT SER-269 AND SER-1826</scope>
    <scope>IDENTIFICATION BY MASS SPECTROMETRY [LARGE SCALE ANALYSIS]</scope>
    <source>
        <tissue>Lung</tissue>
        <tissue>Spleen</tissue>
    </source>
</reference>
<reference key="8">
    <citation type="journal article" date="2016" name="Cell">
        <title>Cell-type-specific alternative splicing governs cell fate in the developing cerebral cortex.</title>
        <authorList>
            <person name="Zhang X."/>
            <person name="Chen M.H."/>
            <person name="Wu X."/>
            <person name="Kodani A."/>
            <person name="Fan J."/>
            <person name="Doan R."/>
            <person name="Ozawa M."/>
            <person name="Ma J."/>
            <person name="Yoshida N."/>
            <person name="Reiter J.F."/>
            <person name="Black D.L."/>
            <person name="Kharchenko P.V."/>
            <person name="Sharp P.A."/>
            <person name="Walsh C.A."/>
        </authorList>
    </citation>
    <scope>IDENTIFICATION OF ISOFORM 4</scope>
    <scope>INTERACTION WITH CEP170 AND CEP250</scope>
    <scope>SUBCELLULAR LOCATION (ISOFORMS 1 AND 4)</scope>
    <scope>DEVELOPMENTAL STAGE (ISOFORM 4)</scope>
</reference>
<dbReference type="EMBL" id="U40342">
    <property type="protein sequence ID" value="AAA83234.1"/>
    <property type="status" value="ALT_SEQ"/>
    <property type="molecule type" value="mRNA"/>
</dbReference>
<dbReference type="EMBL" id="AY515727">
    <property type="protein sequence ID" value="AAS87211.1"/>
    <property type="molecule type" value="mRNA"/>
</dbReference>
<dbReference type="EMBL" id="AK129394">
    <property type="protein sequence ID" value="BAC98204.1"/>
    <property type="status" value="ALT_INIT"/>
    <property type="molecule type" value="mRNA"/>
</dbReference>
<dbReference type="EMBL" id="AC112146">
    <property type="status" value="NOT_ANNOTATED_CDS"/>
    <property type="molecule type" value="Genomic_DNA"/>
</dbReference>
<dbReference type="EMBL" id="AC116574">
    <property type="status" value="NOT_ANNOTATED_CDS"/>
    <property type="molecule type" value="Genomic_DNA"/>
</dbReference>
<dbReference type="EMBL" id="BC137789">
    <property type="protein sequence ID" value="AAI37790.1"/>
    <property type="molecule type" value="mRNA"/>
</dbReference>
<dbReference type="EMBL" id="BC144913">
    <property type="protein sequence ID" value="AAI44914.1"/>
    <property type="molecule type" value="mRNA"/>
</dbReference>
<dbReference type="CCDS" id="CCDS36468.1">
    <molecule id="Q61043-3"/>
</dbReference>
<dbReference type="CCDS" id="CCDS36469.1">
    <molecule id="Q61043-1"/>
</dbReference>
<dbReference type="PIR" id="T30171">
    <property type="entry name" value="T30171"/>
</dbReference>
<dbReference type="RefSeq" id="NP_001074922.1">
    <molecule id="Q61043-3"/>
    <property type="nucleotide sequence ID" value="NM_001081453.1"/>
</dbReference>
<dbReference type="RefSeq" id="NP_001273008.1">
    <molecule id="Q61043-1"/>
    <property type="nucleotide sequence ID" value="NM_001286079.2"/>
</dbReference>
<dbReference type="RefSeq" id="NP_001273009.1">
    <molecule id="Q61043-2"/>
    <property type="nucleotide sequence ID" value="NM_001286080.2"/>
</dbReference>
<dbReference type="RefSeq" id="NP_032723.2">
    <molecule id="Q61043-1"/>
    <property type="nucleotide sequence ID" value="NM_008697.4"/>
</dbReference>
<dbReference type="RefSeq" id="XP_011242311.1">
    <molecule id="Q61043-3"/>
    <property type="nucleotide sequence ID" value="XM_011244009.3"/>
</dbReference>
<dbReference type="SMR" id="Q61043"/>
<dbReference type="BioGRID" id="201772">
    <property type="interactions" value="4"/>
</dbReference>
<dbReference type="FunCoup" id="Q61043">
    <property type="interactions" value="825"/>
</dbReference>
<dbReference type="IntAct" id="Q61043">
    <property type="interactions" value="3"/>
</dbReference>
<dbReference type="MINT" id="Q61043"/>
<dbReference type="STRING" id="10090.ENSMUSP00000152240"/>
<dbReference type="iPTMnet" id="Q61043"/>
<dbReference type="PhosphoSitePlus" id="Q61043"/>
<dbReference type="jPOST" id="Q61043"/>
<dbReference type="PaxDb" id="10090-ENSMUSP00000082422"/>
<dbReference type="ProteomicsDB" id="252836">
    <molecule id="Q61043-3"/>
</dbReference>
<dbReference type="ProteomicsDB" id="252837">
    <molecule id="Q61043-2"/>
</dbReference>
<dbReference type="ProteomicsDB" id="312470"/>
<dbReference type="ProteomicsDB" id="333011"/>
<dbReference type="Pumba" id="Q61043"/>
<dbReference type="Antibodypedia" id="23688">
    <property type="antibodies" value="144 antibodies from 25 providers"/>
</dbReference>
<dbReference type="DNASU" id="18080"/>
<dbReference type="Ensembl" id="ENSMUST00000021468.14">
    <molecule id="Q61043-1"/>
    <property type="protein sequence ID" value="ENSMUSP00000021468.8"/>
    <property type="gene ID" value="ENSMUSG00000021068.18"/>
</dbReference>
<dbReference type="Ensembl" id="ENSMUST00000085314.11">
    <molecule id="Q61043-3"/>
    <property type="protein sequence ID" value="ENSMUSP00000082422.4"/>
    <property type="gene ID" value="ENSMUSG00000021068.18"/>
</dbReference>
<dbReference type="Ensembl" id="ENSMUST00000095666.13">
    <molecule id="Q61043-1"/>
    <property type="protein sequence ID" value="ENSMUSP00000093327.6"/>
    <property type="gene ID" value="ENSMUSG00000021068.18"/>
</dbReference>
<dbReference type="Ensembl" id="ENSMUST00000169074.2">
    <molecule id="Q61043-1"/>
    <property type="protein sequence ID" value="ENSMUSP00000129648.2"/>
    <property type="gene ID" value="ENSMUSG00000021068.18"/>
</dbReference>
<dbReference type="Ensembl" id="ENSMUST00000220689.2">
    <molecule id="Q61043-4"/>
    <property type="protein sequence ID" value="ENSMUSP00000152530.2"/>
    <property type="gene ID" value="ENSMUSG00000021068.18"/>
</dbReference>
<dbReference type="Ensembl" id="ENSMUST00000222237.2">
    <molecule id="Q61043-3"/>
    <property type="protein sequence ID" value="ENSMUSP00000152240.2"/>
    <property type="gene ID" value="ENSMUSG00000021068.18"/>
</dbReference>
<dbReference type="GeneID" id="18080"/>
<dbReference type="KEGG" id="mmu:18080"/>
<dbReference type="UCSC" id="uc007ntf.1">
    <property type="organism name" value="mouse"/>
</dbReference>
<dbReference type="UCSC" id="uc007ntg.2">
    <molecule id="Q61043-3"/>
    <property type="organism name" value="mouse"/>
</dbReference>
<dbReference type="UCSC" id="uc007nth.2">
    <molecule id="Q61043-2"/>
    <property type="organism name" value="mouse"/>
</dbReference>
<dbReference type="AGR" id="MGI:105108"/>
<dbReference type="CTD" id="51199"/>
<dbReference type="MGI" id="MGI:105108">
    <property type="gene designation" value="Nin"/>
</dbReference>
<dbReference type="VEuPathDB" id="HostDB:ENSMUSG00000021068"/>
<dbReference type="eggNOG" id="ENOG502QZCC">
    <property type="taxonomic scope" value="Eukaryota"/>
</dbReference>
<dbReference type="GeneTree" id="ENSGT00660000095541"/>
<dbReference type="HOGENOM" id="CLU_001462_1_1_1"/>
<dbReference type="InParanoid" id="Q61043"/>
<dbReference type="OMA" id="QKVELLX"/>
<dbReference type="OrthoDB" id="5799458at2759"/>
<dbReference type="TreeFam" id="TF325139"/>
<dbReference type="BioGRID-ORCS" id="18080">
    <property type="hits" value="3 hits in 78 CRISPR screens"/>
</dbReference>
<dbReference type="CD-CODE" id="01CA17F3">
    <property type="entry name" value="Centrosome"/>
</dbReference>
<dbReference type="ChiTaRS" id="Nin">
    <property type="organism name" value="mouse"/>
</dbReference>
<dbReference type="PRO" id="PR:Q61043"/>
<dbReference type="Proteomes" id="UP000000589">
    <property type="component" value="Chromosome 12"/>
</dbReference>
<dbReference type="RNAct" id="Q61043">
    <property type="molecule type" value="protein"/>
</dbReference>
<dbReference type="Bgee" id="ENSMUSG00000021068">
    <property type="expression patterns" value="Expressed in cortical plate and 238 other cell types or tissues"/>
</dbReference>
<dbReference type="ExpressionAtlas" id="Q61043">
    <property type="expression patterns" value="baseline and differential"/>
</dbReference>
<dbReference type="GO" id="GO:0045177">
    <property type="term" value="C:apical part of cell"/>
    <property type="evidence" value="ECO:0000314"/>
    <property type="project" value="MGI"/>
</dbReference>
<dbReference type="GO" id="GO:0030424">
    <property type="term" value="C:axon"/>
    <property type="evidence" value="ECO:0000314"/>
    <property type="project" value="MGI"/>
</dbReference>
<dbReference type="GO" id="GO:0044295">
    <property type="term" value="C:axonal growth cone"/>
    <property type="evidence" value="ECO:0000314"/>
    <property type="project" value="MGI"/>
</dbReference>
<dbReference type="GO" id="GO:0120103">
    <property type="term" value="C:centriolar subdistal appendage"/>
    <property type="evidence" value="ECO:0007669"/>
    <property type="project" value="Ensembl"/>
</dbReference>
<dbReference type="GO" id="GO:0005814">
    <property type="term" value="C:centriole"/>
    <property type="evidence" value="ECO:0000314"/>
    <property type="project" value="MGI"/>
</dbReference>
<dbReference type="GO" id="GO:0005813">
    <property type="term" value="C:centrosome"/>
    <property type="evidence" value="ECO:0000314"/>
    <property type="project" value="MGI"/>
</dbReference>
<dbReference type="GO" id="GO:0036064">
    <property type="term" value="C:ciliary basal body"/>
    <property type="evidence" value="ECO:0007669"/>
    <property type="project" value="Ensembl"/>
</dbReference>
<dbReference type="GO" id="GO:0097539">
    <property type="term" value="C:ciliary transition fiber"/>
    <property type="evidence" value="ECO:0000314"/>
    <property type="project" value="MGI"/>
</dbReference>
<dbReference type="GO" id="GO:0005881">
    <property type="term" value="C:cytoplasmic microtubule"/>
    <property type="evidence" value="ECO:0000314"/>
    <property type="project" value="MGI"/>
</dbReference>
<dbReference type="GO" id="GO:0005829">
    <property type="term" value="C:cytosol"/>
    <property type="evidence" value="ECO:0000314"/>
    <property type="project" value="MGI"/>
</dbReference>
<dbReference type="GO" id="GO:0030425">
    <property type="term" value="C:dendrite"/>
    <property type="evidence" value="ECO:0000314"/>
    <property type="project" value="MGI"/>
</dbReference>
<dbReference type="GO" id="GO:0097431">
    <property type="term" value="C:mitotic spindle pole"/>
    <property type="evidence" value="ECO:0000314"/>
    <property type="project" value="MGI"/>
</dbReference>
<dbReference type="GO" id="GO:0005730">
    <property type="term" value="C:nucleolus"/>
    <property type="evidence" value="ECO:0007669"/>
    <property type="project" value="Ensembl"/>
</dbReference>
<dbReference type="GO" id="GO:0005654">
    <property type="term" value="C:nucleoplasm"/>
    <property type="evidence" value="ECO:0007669"/>
    <property type="project" value="Ensembl"/>
</dbReference>
<dbReference type="GO" id="GO:0000242">
    <property type="term" value="C:pericentriolar material"/>
    <property type="evidence" value="ECO:0000266"/>
    <property type="project" value="MGI"/>
</dbReference>
<dbReference type="GO" id="GO:0005886">
    <property type="term" value="C:plasma membrane"/>
    <property type="evidence" value="ECO:0000314"/>
    <property type="project" value="MGI"/>
</dbReference>
<dbReference type="GO" id="GO:0000922">
    <property type="term" value="C:spindle pole"/>
    <property type="evidence" value="ECO:0000266"/>
    <property type="project" value="MGI"/>
</dbReference>
<dbReference type="GO" id="GO:0005509">
    <property type="term" value="F:calcium ion binding"/>
    <property type="evidence" value="ECO:0007669"/>
    <property type="project" value="InterPro"/>
</dbReference>
<dbReference type="GO" id="GO:0005525">
    <property type="term" value="F:GTP binding"/>
    <property type="evidence" value="ECO:0007669"/>
    <property type="project" value="UniProtKB-KW"/>
</dbReference>
<dbReference type="GO" id="GO:0051011">
    <property type="term" value="F:microtubule minus-end binding"/>
    <property type="evidence" value="ECO:0000314"/>
    <property type="project" value="MGI"/>
</dbReference>
<dbReference type="GO" id="GO:0010457">
    <property type="term" value="P:centriole-centriole cohesion"/>
    <property type="evidence" value="ECO:0007669"/>
    <property type="project" value="Ensembl"/>
</dbReference>
<dbReference type="GO" id="GO:0051642">
    <property type="term" value="P:centrosome localization"/>
    <property type="evidence" value="ECO:0000315"/>
    <property type="project" value="MGI"/>
</dbReference>
<dbReference type="GO" id="GO:0090222">
    <property type="term" value="P:centrosome-templated microtubule nucleation"/>
    <property type="evidence" value="ECO:0000315"/>
    <property type="project" value="MGI"/>
</dbReference>
<dbReference type="GO" id="GO:0048668">
    <property type="term" value="P:collateral sprouting"/>
    <property type="evidence" value="ECO:0000316"/>
    <property type="project" value="MGI"/>
</dbReference>
<dbReference type="GO" id="GO:0021540">
    <property type="term" value="P:corpus callosum morphogenesis"/>
    <property type="evidence" value="ECO:0000316"/>
    <property type="project" value="MGI"/>
</dbReference>
<dbReference type="GO" id="GO:0021957">
    <property type="term" value="P:corticospinal tract morphogenesis"/>
    <property type="evidence" value="ECO:0000316"/>
    <property type="project" value="MGI"/>
</dbReference>
<dbReference type="GO" id="GO:0034454">
    <property type="term" value="P:microtubule anchoring at centrosome"/>
    <property type="evidence" value="ECO:0000315"/>
    <property type="project" value="MGI"/>
</dbReference>
<dbReference type="GO" id="GO:0007052">
    <property type="term" value="P:mitotic spindle organization"/>
    <property type="evidence" value="ECO:0000315"/>
    <property type="project" value="MGI"/>
</dbReference>
<dbReference type="GO" id="GO:1904780">
    <property type="term" value="P:negative regulation of protein localization to centrosome"/>
    <property type="evidence" value="ECO:0000269"/>
    <property type="project" value="MGI"/>
</dbReference>
<dbReference type="GO" id="GO:0050772">
    <property type="term" value="P:positive regulation of axonogenesis"/>
    <property type="evidence" value="ECO:0000316"/>
    <property type="project" value="MGI"/>
</dbReference>
<dbReference type="GO" id="GO:0045666">
    <property type="term" value="P:positive regulation of neuron differentiation"/>
    <property type="evidence" value="ECO:0000269"/>
    <property type="project" value="MGI"/>
</dbReference>
<dbReference type="GO" id="GO:0008104">
    <property type="term" value="P:protein localization"/>
    <property type="evidence" value="ECO:0007669"/>
    <property type="project" value="Ensembl"/>
</dbReference>
<dbReference type="FunFam" id="1.10.238.10:FF:000094">
    <property type="entry name" value="ninein isoform X7"/>
    <property type="match status" value="1"/>
</dbReference>
<dbReference type="InterPro" id="IPR011992">
    <property type="entry name" value="EF-hand-dom_pair"/>
</dbReference>
<dbReference type="InterPro" id="IPR002048">
    <property type="entry name" value="EF_hand_dom"/>
</dbReference>
<dbReference type="PANTHER" id="PTHR18905">
    <property type="entry name" value="NINEIN"/>
    <property type="match status" value="1"/>
</dbReference>
<dbReference type="PANTHER" id="PTHR18905:SF11">
    <property type="entry name" value="NINEIN"/>
    <property type="match status" value="1"/>
</dbReference>
<dbReference type="SUPFAM" id="SSF47473">
    <property type="entry name" value="EF-hand"/>
    <property type="match status" value="1"/>
</dbReference>
<dbReference type="PROSITE" id="PS50222">
    <property type="entry name" value="EF_HAND_2"/>
    <property type="match status" value="5"/>
</dbReference>
<evidence type="ECO:0000250" key="1">
    <source>
        <dbReference type="UniProtKB" id="Q8N4C6"/>
    </source>
</evidence>
<evidence type="ECO:0000255" key="2"/>
<evidence type="ECO:0000255" key="3">
    <source>
        <dbReference type="PROSITE-ProRule" id="PRU00448"/>
    </source>
</evidence>
<evidence type="ECO:0000256" key="4">
    <source>
        <dbReference type="SAM" id="MobiDB-lite"/>
    </source>
</evidence>
<evidence type="ECO:0000269" key="5">
    <source>
    </source>
</evidence>
<evidence type="ECO:0000269" key="6">
    <source>
    </source>
</evidence>
<evidence type="ECO:0000269" key="7">
    <source>
    </source>
</evidence>
<evidence type="ECO:0000269" key="8">
    <source>
    </source>
</evidence>
<evidence type="ECO:0000303" key="9">
    <source>
    </source>
</evidence>
<evidence type="ECO:0000303" key="10">
    <source>
    </source>
</evidence>
<evidence type="ECO:0000305" key="11"/>
<evidence type="ECO:0000312" key="12">
    <source>
        <dbReference type="EMBL" id="AAI37790.1"/>
    </source>
</evidence>
<evidence type="ECO:0000312" key="13">
    <source>
        <dbReference type="EMBL" id="AAS87211.1"/>
    </source>
</evidence>
<evidence type="ECO:0000312" key="14">
    <source>
        <dbReference type="MGI" id="MGI:105108"/>
    </source>
</evidence>
<evidence type="ECO:0007744" key="15">
    <source>
    </source>
</evidence>
<name>NIN_MOUSE</name>
<sequence length="2113" mass="243718">MDEVEEDQHEARLKELFDSFDTLGTGSLGQEELTDLCHVLCLEDVGPVLQQTLLQDNLLGRVHFDQFKEALILILSRTLSSEEHFEESDCSPEAQPKYVRGGKRYGRRSLPEFQESGEEIEEVTVLEPLEEEARSSPIPAGDCGEHWKTQRSEEYEAEGQLRFWNPDDLNASHGGSCPPPDWIEEKLQEVCEDLGITRDGHLNRKKLVSICEQYGLQNVDGAMLEEVFLSLDPDGTMSVEDFFYGLFKTGKSLTPSASTPYRQLKRHLSMQSFDESGRRTATSSAMTSTIGFRVFSCLDDGMGQASVERILDTWQEEGIENSQEILKALDFSLDGNINLTELTLALENELLVTKNGIHQAALASFKAEIRHLLERVDQVVREKEKLRSDLDKAEKLKSLMASEVDDHHAAIERRNEYNLRKLDEEYKERIAALKNELRQEREQMLQQVGKQRVELEQEIQKAKTEENYIRDRLALSLKENNRLETELLENAEKLAEYESLTQKLQRSLENVLAEKFGDLDPSSAEFFLQEERLAQMRNEYEQQCRLLQDQVDELQSELEEYQAQGRVLRLPLKNSLSEELDGHSGGIEPDQGPGSEECNPLNMSIEAELVIEQMKEQHHRDLCHLRLELEDKVRHYEKQLDDTRVASEQEQAAMKQKYEQGVHTLEKRVSELRSEIADLEGQAAVLREAHHKASCRHEEEKRQLQMAFDEEKAQLQEELRQEHERELQARLQQAAESFRQEREGLAQAAWTEEKVRGLEQSYQEQLLSLEEKHALEKEELREELSEHHRRELQEGREEMETECNRRVSQIEAQCQADCEKVTEHCEQTLQSLEVRHRQELRDLLDQHLEERSQWEFEKDELTQECTDAQEQLKEALQRERATAAAMKQEQEILERTYKDRLNILSTERKQLLQDLKDLQNASESQHGLLSGQILELKRSQERELRDQGQALCQTGVSEQLASQQLERLRVEHEQERREMTGKLAALESAHRASLERADQEKAEMSTEICRLQNTVKDMQQAASLLMLQGGCQATAGEEAEGDGAMSLLQQGEQLLEENGDVLISLQRAHEHAVKENAKMATEISRLQQRLKKLEPGSVISSCLEEGTSEISGSSREQVEPIMKQGPATKHFLSDLGDHEARDLASTGTSSVQRQECKTEASEASLDCFSELENSEDTRTESWDLKSQISQLREQLTVLRADCDRASERKQDLLFDISVLKKKLKMLERLPEASSRYKVLYEDAARENSCLQEELRLVETRYEESLDSNKELTAEVYRLQDEMKKMEEVMETFLSLEKSYDEVKVENEELRALVLRLQGKMEKVLGRAALQGDSYALWEAPSENLEVASDEKMLELRQTPKECTPKVVSMHHIIEECTQETQCCEQGSTKLLARIKAHEIAWFHRAIKTHPEKPSAQNRVIPEGSAALLGLQDKHLQQEATIAELELEKQKLQELTRNLRERVTALVRQKDAPSQGQKEEELKAMMQDLQITCGEMQRKVELLRYESEKLQEENSILRNEITTLNEEDSISNLKLEELNGSQEELWQKIETIEQEKASIQTMVEKLKKQVSDLKIKNQQLDSENIELSQKNSQNKEELKTLNQRLAEMLCQREEPGACTSEKWEQENASLKEELDHYKVQTSTLVSSLEAELSEVKLQTHVMEQENLLLKDELERLKQLHRCPDLSDFQQKMSSILSYNEKLLKEKEVLSEELKSCADKLAESSLLEHRIATMKQEQTAWEEQSESLKSQLAVSQAKVQNLEDVLQNVNLQMAEIESDLQVTRQEKEALKQEVMSLHRQLQNAIDKDWVSETAPHLSGLRGQQRRLSWDKLDHLMNEEPQLLCQESKRLQTVVQNTQADLTHSREKVRQLESNLLPTKHQKQLNQPCTVKSTEQEKLTLKRECEQSQKEQSPTSRKVGQMGSLERGLETIHLENEGLKKKQMQPLRSTVTRSPSSHWDLQLLQQQACPMVPREQFLQLQQQLLQAEKRSQHLQEELENRTSETNTPQGNQEHLVNLMEERMIEVEQKLKLVKRLLQEKVNQLKEQLCKNTKTDAVVKDLYVENAQLLKALEMTEQRQKTAEKRNFLLEEKIASLSTIVRNLAPAPLTSMPPLRS</sequence>
<comment type="function">
    <text evidence="1 5 6">Centrosomal protein required for the positioning and anchorage of the microtubule minus-end in epithelial cells (PubMed:10934040, PubMed:15784680). May also act as a centrosome maturation factor (By similarity). May play a role in microtubule nucleation, by recruiting the gamma-tubulin ring complex to the centrosome (PubMed:15784680). Overexpression does not perturb nucleation or elongation of microtubules but suppresses release of microtubules (By similarity). Required for centriole organization and microtubule anchoring at the mother centriole (By similarity).</text>
</comment>
<comment type="subunit">
    <text evidence="1 6 7">Homooligomer (By similarity). Interacts with GSK3B/GSK3-beta via its C-terminal domain (By similarity). Interacts with C14ORF166, such interaction may prevent its phosphorylation by GSK3B (By similarity). Interacts with AUNIP (via N-terminus) (By similarity). Identified in a complex with AUNIP and AURKA (By similarity). Interacts with CCDC120 (By similarity). Interacts (via C-terminus) with CEP250 (PubMed:27565344). Interacts with CEP170 (PubMed:27565344). Interacts (via N-terminus) with the gamma-tubulin ring complex component TUBGCP3 (PubMed:15784680). Interacts with gamma-tubulin (PubMed:15784680). Isoform 4 does not interact with CEP170 or CEP250 (PubMed:27565344).</text>
</comment>
<comment type="subcellular location">
    <subcellularLocation>
        <location evidence="7 8">Cytoplasm</location>
        <location evidence="7 8">Cytoskeleton</location>
        <location evidence="7 8">Microtubule organizing center</location>
        <location evidence="7 8">Centrosome</location>
    </subcellularLocation>
    <subcellularLocation>
        <location evidence="6">Cytoplasm</location>
        <location evidence="6">Cytoskeleton</location>
        <location evidence="6">Microtubule organizing center</location>
        <location evidence="6">Centrosome</location>
        <location evidence="6">Centriole</location>
    </subcellularLocation>
    <text evidence="1">Component of the core centrosome. Arranged in a tubular conformation with an open and a closed end within the centrosome. In the mother centrosome, it localizes at both ends of the centrosome tube, including the site of centrosome duplication, while in the daughter centrosome it is present only at the closed end. Requires PCM1 for centrosome localization. Localizes to the subdistal appendage region of the centriole in a DCTN1-dependent manner.</text>
</comment>
<comment type="subcellular location">
    <molecule>Isoform 4</molecule>
    <subcellularLocation>
        <location evidence="7">Cytoplasm</location>
    </subcellularLocation>
    <text evidence="7">Seems to have a dominant-negative effect on localization of other isoforms, promoting their dissociation from the centrosome.</text>
</comment>
<comment type="alternative products">
    <event type="alternative splicing"/>
    <isoform>
        <id>Q61043-3</id>
        <name>1</name>
        <name evidence="9">NPC-CT</name>
        <sequence type="displayed"/>
    </isoform>
    <isoform>
        <id>Q61043-2</id>
        <name>2</name>
        <sequence type="described" ref="VSP_059555 VSP_059556"/>
    </isoform>
    <isoform>
        <id>Q61043-1</id>
        <name>3</name>
        <sequence type="described" ref="VSP_059552 VSP_059555 VSP_059556"/>
    </isoform>
    <isoform>
        <id>Q61043-4</id>
        <name>4</name>
        <name evidence="9">Neuron</name>
        <sequence type="described" ref="VSP_059551 VSP_059553 VSP_059554"/>
    </isoform>
</comment>
<comment type="tissue specificity">
    <text evidence="8">Widely expressed. Highly expressed in spleen, bone marrow and skin. Weakly expressed in liver and small intestine. Expressed in brain.</text>
</comment>
<comment type="developmental stage">
    <text evidence="7 8">Associated with the centrosome throughout the cell cycle (PubMed:8834802). During mitosis, it is associated with the centrosome and the mitotic spindle (PubMed:8834802). At anaphase, it is only localized to centrosomes (PubMed:8834802). Isoform 4 is highly expressed in postmitotic cortical neurons during neurogenesis (PubMed:27565344).</text>
</comment>
<comment type="domain">
    <text evidence="1 6">There is conflicting information regarding the regions required for centrosomal localization (PubMed:15784680). One study shows that the region 1591-1671 is necessary and sufficient for targeting to the centrosome (By similarity). Another study shows that a separate region within the coiled-coil domain, 1279-1565, is important for centrosomal localization (By similarity). However, a third study shows that the coiled-coil region (373-1874) is not sufficient for centrosomal localization and instead localizes to cytoplasmic speckles (PubMed:15784680). The observed differences might be due to oligomerization of the longer coiled-coil domain-containing sequence, which would mask the shorter centrosomal targeting sequences (PubMed:15784680).</text>
</comment>
<comment type="domain">
    <text evidence="8">The N-terminal domain is important for targeting to the mother centriole, although it is not sufficient by itself for centrosomal localization.</text>
</comment>
<comment type="PTM">
    <text>Phosphorylated by AURKA/Aurora kinase A and PKA kinases but not CK2 or AURKB/Aurora kinase B.</text>
</comment>
<comment type="sequence caution" evidence="11">
    <conflict type="erroneous initiation">
        <sequence resource="EMBL-CDS" id="AAA83234"/>
    </conflict>
    <text>Extended N-terminus.</text>
</comment>
<comment type="sequence caution" evidence="11">
    <conflict type="erroneous initiation">
        <sequence resource="EMBL-CDS" id="BAC98204"/>
    </conflict>
    <text>Extended N-terminus.</text>
</comment>
<comment type="sequence caution" evidence="11">
    <molecule>Isoform 2</molecule>
    <conflict type="frameshift">
        <sequence resource="EMBL-CDS" id="AAA83234"/>
    </conflict>
</comment>
<gene>
    <name evidence="14" type="primary">Nin</name>
    <name evidence="14" type="synonym">Kiaa1565</name>
</gene>
<protein>
    <recommendedName>
        <fullName evidence="10">Ninein</fullName>
    </recommendedName>
</protein>
<keyword id="KW-0025">Alternative splicing</keyword>
<keyword id="KW-0175">Coiled coil</keyword>
<keyword id="KW-0963">Cytoplasm</keyword>
<keyword id="KW-0206">Cytoskeleton</keyword>
<keyword id="KW-0342">GTP-binding</keyword>
<keyword id="KW-0493">Microtubule</keyword>
<keyword id="KW-0547">Nucleotide-binding</keyword>
<keyword id="KW-0597">Phosphoprotein</keyword>
<keyword id="KW-1185">Reference proteome</keyword>
<keyword id="KW-0677">Repeat</keyword>
<feature type="chain" id="PRO_0000096845" description="Ninein">
    <location>
        <begin position="1"/>
        <end position="2113"/>
    </location>
</feature>
<feature type="domain" description="EF-hand 1" evidence="3">
    <location>
        <begin position="8"/>
        <end position="43"/>
    </location>
</feature>
<feature type="domain" description="EF-hand 2" evidence="3">
    <location>
        <begin position="42"/>
        <end position="77"/>
    </location>
</feature>
<feature type="domain" description="EF-hand 3" evidence="3">
    <location>
        <begin position="182"/>
        <end position="217"/>
    </location>
</feature>
<feature type="domain" description="EF-hand 4" evidence="3">
    <location>
        <begin position="219"/>
        <end position="252"/>
    </location>
</feature>
<feature type="domain" description="EF-hand 5" evidence="3">
    <location>
        <begin position="317"/>
        <end position="352"/>
    </location>
</feature>
<feature type="region of interest" description="Disordered" evidence="4">
    <location>
        <begin position="578"/>
        <end position="599"/>
    </location>
</feature>
<feature type="region of interest" description="Important for interaction with CEP170" evidence="7">
    <location>
        <begin position="798"/>
        <end position="1495"/>
    </location>
</feature>
<feature type="region of interest" description="Disordered" evidence="4">
    <location>
        <begin position="1899"/>
        <end position="1922"/>
    </location>
</feature>
<feature type="region of interest" description="Disordered" evidence="4">
    <location>
        <begin position="1988"/>
        <end position="2008"/>
    </location>
</feature>
<feature type="coiled-coil region" evidence="2">
    <location>
        <begin position="358"/>
        <end position="570"/>
    </location>
</feature>
<feature type="coiled-coil region" evidence="2">
    <location>
        <begin position="620"/>
        <end position="926"/>
    </location>
</feature>
<feature type="coiled-coil region" evidence="2">
    <location>
        <begin position="958"/>
        <end position="1008"/>
    </location>
</feature>
<feature type="coiled-coil region" evidence="2">
    <location>
        <begin position="1175"/>
        <end position="1323"/>
    </location>
</feature>
<feature type="coiled-coil region" evidence="2">
    <location>
        <begin position="1425"/>
        <end position="1806"/>
    </location>
</feature>
<feature type="coiled-coil region" evidence="2">
    <location>
        <begin position="1852"/>
        <end position="1910"/>
    </location>
</feature>
<feature type="coiled-coil region" evidence="2">
    <location>
        <begin position="1971"/>
        <end position="2093"/>
    </location>
</feature>
<feature type="compositionally biased region" description="Basic and acidic residues" evidence="4">
    <location>
        <begin position="1988"/>
        <end position="1999"/>
    </location>
</feature>
<feature type="binding site" evidence="2">
    <location>
        <begin position="245"/>
        <end position="252"/>
    </location>
    <ligand>
        <name>GTP</name>
        <dbReference type="ChEBI" id="CHEBI:37565"/>
    </ligand>
</feature>
<feature type="binding site" evidence="2">
    <location>
        <begin position="300"/>
        <end position="304"/>
    </location>
    <ligand>
        <name>GTP</name>
        <dbReference type="ChEBI" id="CHEBI:37565"/>
    </ligand>
</feature>
<feature type="binding site" evidence="2">
    <location>
        <begin position="420"/>
        <end position="423"/>
    </location>
    <ligand>
        <name>GTP</name>
        <dbReference type="ChEBI" id="CHEBI:37565"/>
    </ligand>
</feature>
<feature type="modified residue" description="Phosphoserine" evidence="1">
    <location>
        <position position="152"/>
    </location>
</feature>
<feature type="modified residue" description="Phosphoserine" evidence="15">
    <location>
        <position position="269"/>
    </location>
</feature>
<feature type="modified residue" description="Phosphoserine" evidence="1">
    <location>
        <position position="1540"/>
    </location>
</feature>
<feature type="modified residue" description="Phosphoserine" evidence="15">
    <location>
        <position position="1826"/>
    </location>
</feature>
<feature type="splice variant" id="VSP_059551" description="In isoform 4.">
    <location>
        <begin position="797"/>
        <end position="1503"/>
    </location>
</feature>
<feature type="splice variant" id="VSP_059552" description="In isoform 3.">
    <original>Q</original>
    <variation>QVRLDEKLME</variation>
    <location>
        <position position="1940"/>
    </location>
</feature>
<feature type="splice variant" id="VSP_059553" description="In isoform 4.">
    <original>MQPLRSTVTRSPSSHWDLQLLQQQACPMVPREQFLQLQQ</original>
    <variation>VRLDEKLMESSVVGSSRAGRSSVPELACEDAAPEVHCDA</variation>
    <location>
        <begin position="1941"/>
        <end position="1979"/>
    </location>
</feature>
<feature type="splice variant" id="VSP_059554" description="In isoform 4.">
    <location>
        <begin position="1980"/>
        <end position="2113"/>
    </location>
</feature>
<feature type="splice variant" id="VSP_059555" description="In isoform 2 and isoform 3.">
    <original>GNQEHLVNLMEERMIEVEQK</original>
    <variation>ALLLEQRAVHADSCRRIGHL</variation>
    <location>
        <begin position="2007"/>
        <end position="2026"/>
    </location>
</feature>
<feature type="splice variant" id="VSP_059556" description="In isoform 2 and isoform 3.">
    <location>
        <begin position="2027"/>
        <end position="2113"/>
    </location>
</feature>
<feature type="sequence conflict" description="In Ref. 1; AAA83234." evidence="11" ref="1">
    <original>EH</original>
    <variation>DD</variation>
    <location>
        <begin position="145"/>
        <end position="146"/>
    </location>
</feature>
<feature type="sequence conflict" description="In Ref. 1; AAA83234." evidence="11" ref="1">
    <original>EL</original>
    <variation>DV</variation>
    <location>
        <begin position="341"/>
        <end position="342"/>
    </location>
</feature>
<feature type="sequence conflict" description="In Ref. 1; AAA83234." evidence="11" ref="1">
    <original>KEKLRSDLDKAE</original>
    <variation>RRAYGRTWTSR</variation>
    <location>
        <begin position="383"/>
        <end position="394"/>
    </location>
</feature>
<feature type="sequence conflict" description="In Ref. 1; AAA83234." evidence="11" ref="1">
    <original>R</original>
    <variation>A</variation>
    <location>
        <position position="506"/>
    </location>
</feature>
<feature type="sequence conflict" description="In Ref. 3; BAC98204." evidence="11" ref="3">
    <original>Y</original>
    <variation>H</variation>
    <location>
        <position position="561"/>
    </location>
</feature>
<feature type="sequence conflict" description="In Ref. 2; AAS87211." evidence="11" ref="2">
    <original>E</original>
    <variation>K</variation>
    <location>
        <position position="675"/>
    </location>
</feature>
<feature type="sequence conflict" description="In Ref. 1; AAA83234." evidence="11" ref="1">
    <original>S</original>
    <variation>T</variation>
    <location>
        <position position="737"/>
    </location>
</feature>
<feature type="sequence conflict" description="In Ref. 1; AAA83234." evidence="11" ref="1">
    <original>T</original>
    <variation>A</variation>
    <location>
        <position position="862"/>
    </location>
</feature>
<feature type="sequence conflict" description="In Ref. 1; AAA83234, 3; BAC98204, 5; AAI37790/AAI44914 and 2; AAS87211." evidence="11" ref="1 3 5 2">
    <original>K</original>
    <variation>E</variation>
    <location>
        <position position="909"/>
    </location>
</feature>
<feature type="sequence conflict" description="In Ref. 1; AAA83234." evidence="11" ref="1">
    <original>QQ</original>
    <variation>PE</variation>
    <location>
        <begin position="963"/>
        <end position="964"/>
    </location>
</feature>
<feature type="sequence conflict" description="In Ref. 1; AAA83234 and 2; AAS87211." evidence="11" ref="1 2">
    <original>SR</original>
    <variation>YQ</variation>
    <location>
        <begin position="1084"/>
        <end position="1085"/>
    </location>
</feature>
<feature type="sequence conflict" description="In Ref. 3; BAC98204 and 5; AAI37790/AAI44914." evidence="11" ref="3 5">
    <original>S</original>
    <variation>Y</variation>
    <location>
        <position position="1084"/>
    </location>
</feature>
<feature type="sequence conflict" description="In Ref. 1; AAA83234 and 2; AAS87211." evidence="11" ref="1 2">
    <original>E</original>
    <variation>K</variation>
    <location>
        <position position="1155"/>
    </location>
</feature>
<feature type="sequence conflict" description="In Ref. 1; AAA83234." evidence="11" ref="1">
    <location>
        <position position="1182"/>
    </location>
</feature>
<feature type="sequence conflict" description="In Ref. 2; AAS87211." evidence="11" ref="2">
    <original>A</original>
    <variation>P</variation>
    <location>
        <position position="1327"/>
    </location>
</feature>
<feature type="sequence conflict" description="In Ref. 1; AAA83234." evidence="11" ref="1">
    <original>LWEA</original>
    <variation>SGKP</variation>
    <location>
        <begin position="1336"/>
        <end position="1339"/>
    </location>
</feature>
<feature type="sequence conflict" description="In Ref. 1; AAA83234." evidence="11" ref="1">
    <original>DLQI</original>
    <variation>PAV</variation>
    <location>
        <begin position="1487"/>
        <end position="1490"/>
    </location>
</feature>
<feature type="sequence conflict" description="In Ref. 1; AAA83234." evidence="11" ref="1">
    <original>EV</original>
    <variation>RI</variation>
    <location>
        <begin position="1653"/>
        <end position="1654"/>
    </location>
</feature>
<feature type="sequence conflict" description="In Ref. 1; AAA83234." evidence="11" ref="1">
    <original>F</original>
    <variation>L</variation>
    <location>
        <position position="1687"/>
    </location>
</feature>
<feature type="sequence conflict" description="In Ref. 1; AAA83234." evidence="11" ref="1">
    <original>I</original>
    <variation>V</variation>
    <location>
        <position position="1694"/>
    </location>
</feature>
<feature type="sequence conflict" description="In Ref. 1; AAA83234." evidence="11" ref="1">
    <original>N</original>
    <variation>D</variation>
    <location>
        <position position="1759"/>
    </location>
</feature>
<feature type="sequence conflict" description="In Ref. 1; AAA83234." evidence="11" ref="1">
    <original>L</original>
    <variation>V</variation>
    <location>
        <position position="1788"/>
    </location>
</feature>
<feature type="sequence conflict" description="In Ref. 5; AAI44914." evidence="11" ref="5">
    <original>L</original>
    <variation>F</variation>
    <location>
        <position position="1841"/>
    </location>
</feature>
<accession>Q61043</accession>
<accession>A0A1Y7VJL5</accession>
<accession>B2RQ73</accession>
<accession>B7ZMZ9</accession>
<accession>E9Q488</accession>
<accession>E9Q4S3</accession>
<accession>Q674R4</accession>
<accession>Q6ZPM7</accession>
<proteinExistence type="evidence at protein level"/>